<protein>
    <recommendedName>
        <fullName>Protein K7</fullName>
    </recommendedName>
</protein>
<keyword id="KW-0002">3D-structure</keyword>
<keyword id="KW-1035">Host cytoplasm</keyword>
<keyword id="KW-0945">Host-virus interaction</keyword>
<keyword id="KW-1090">Inhibition of host innate immune response by virus</keyword>
<keyword id="KW-1100">Inhibition of host NF-kappa-B by virus</keyword>
<keyword id="KW-1113">Inhibition of host RLR pathway by virus</keyword>
<keyword id="KW-1185">Reference proteome</keyword>
<keyword id="KW-0899">Viral immunoevasion</keyword>
<organism>
    <name type="scientific">Vaccinia virus (strain Western Reserve)</name>
    <name type="common">VACV</name>
    <name type="synonym">Vaccinia virus (strain WR)</name>
    <dbReference type="NCBI Taxonomy" id="10254"/>
    <lineage>
        <taxon>Viruses</taxon>
        <taxon>Varidnaviria</taxon>
        <taxon>Bamfordvirae</taxon>
        <taxon>Nucleocytoviricota</taxon>
        <taxon>Pokkesviricetes</taxon>
        <taxon>Chitovirales</taxon>
        <taxon>Poxviridae</taxon>
        <taxon>Chordopoxvirinae</taxon>
        <taxon>Orthopoxvirus</taxon>
        <taxon>Vaccinia virus</taxon>
    </lineage>
</organism>
<sequence>MATKLDYEDAVFYFVDDDKICSRDSIIDLIDEYITWRNHVIVFNKDITSCGRLYKELMKFDDVAIRYYGIDKINEIVEAMSEGDHYINFTKVHDQESLFATIGICAKITEHWGYKKISESRFQSLGNITDLMTDDNINILILFLEKKLN</sequence>
<gene>
    <name type="primary">OPG044</name>
    <name type="ordered locus">VACWR039</name>
    <name type="ORF">K7R</name>
</gene>
<organismHost>
    <name type="scientific">Bos taurus</name>
    <name type="common">Bovine</name>
    <dbReference type="NCBI Taxonomy" id="9913"/>
</organismHost>
<dbReference type="EMBL" id="D00382">
    <property type="protein sequence ID" value="BAA00293.1"/>
    <property type="molecule type" value="Genomic_DNA"/>
</dbReference>
<dbReference type="EMBL" id="AY243312">
    <property type="protein sequence ID" value="AAO89318.1"/>
    <property type="molecule type" value="Genomic_DNA"/>
</dbReference>
<dbReference type="PIR" id="JS0217">
    <property type="entry name" value="WMVZK7"/>
</dbReference>
<dbReference type="RefSeq" id="YP_232921.1">
    <property type="nucleotide sequence ID" value="NC_006998.1"/>
</dbReference>
<dbReference type="PDB" id="2K36">
    <property type="method" value="NMR"/>
    <property type="chains" value="A=1-149"/>
</dbReference>
<dbReference type="PDB" id="3JRV">
    <property type="method" value="X-ray"/>
    <property type="resolution" value="1.60 A"/>
    <property type="chains" value="A/B=1-149"/>
</dbReference>
<dbReference type="PDBsum" id="2K36"/>
<dbReference type="PDBsum" id="3JRV"/>
<dbReference type="BMRB" id="P68466"/>
<dbReference type="SMR" id="P68466"/>
<dbReference type="DIP" id="DIP-48288N"/>
<dbReference type="IntAct" id="P68466">
    <property type="interactions" value="28"/>
</dbReference>
<dbReference type="DNASU" id="3707496"/>
<dbReference type="GeneID" id="3707496"/>
<dbReference type="KEGG" id="vg:3707496"/>
<dbReference type="EvolutionaryTrace" id="P68466"/>
<dbReference type="Proteomes" id="UP000000344">
    <property type="component" value="Genome"/>
</dbReference>
<dbReference type="GO" id="GO:0030430">
    <property type="term" value="C:host cell cytoplasm"/>
    <property type="evidence" value="ECO:0007669"/>
    <property type="project" value="UniProtKB-SubCell"/>
</dbReference>
<dbReference type="GO" id="GO:0140311">
    <property type="term" value="F:protein sequestering activity"/>
    <property type="evidence" value="ECO:0000314"/>
    <property type="project" value="UniProt"/>
</dbReference>
<dbReference type="GO" id="GO:0039548">
    <property type="term" value="P:symbiont-mediated suppression of host cytoplasmic pattern recognition receptor signaling pathway via inhibition of IRF3 activity"/>
    <property type="evidence" value="ECO:0000314"/>
    <property type="project" value="UniProt"/>
</dbReference>
<dbReference type="GO" id="GO:0085034">
    <property type="term" value="P:symbiont-mediated suppression of host NF-kappaB cascade"/>
    <property type="evidence" value="ECO:0007669"/>
    <property type="project" value="UniProtKB-KW"/>
</dbReference>
<dbReference type="GO" id="GO:0039527">
    <property type="term" value="P:symbiont-mediated suppression of host TRAF-mediated signal transduction"/>
    <property type="evidence" value="ECO:0000269"/>
    <property type="project" value="SigSci"/>
</dbReference>
<dbReference type="DisProt" id="DP02194"/>
<dbReference type="Gene3D" id="1.10.437.20">
    <property type="entry name" value="dsDNA poxvirus"/>
    <property type="match status" value="1"/>
</dbReference>
<dbReference type="IDEAL" id="IID90010"/>
<dbReference type="InterPro" id="IPR009174">
    <property type="entry name" value="Orthopox_K7"/>
</dbReference>
<dbReference type="InterPro" id="IPR022819">
    <property type="entry name" value="Poxvirus_Bcl-2-like"/>
</dbReference>
<dbReference type="InterPro" id="IPR043018">
    <property type="entry name" value="Poxvirus_sf"/>
</dbReference>
<dbReference type="Pfam" id="PF06227">
    <property type="entry name" value="Poxv_Bcl-2-like"/>
    <property type="match status" value="1"/>
</dbReference>
<dbReference type="PIRSF" id="PIRSF003764">
    <property type="entry name" value="VAC_K7R"/>
    <property type="match status" value="1"/>
</dbReference>
<evidence type="ECO:0000269" key="1">
    <source>
    </source>
</evidence>
<evidence type="ECO:0000269" key="2">
    <source>
    </source>
</evidence>
<evidence type="ECO:0000269" key="3">
    <source>
    </source>
</evidence>
<evidence type="ECO:0000269" key="4">
    <source>
    </source>
</evidence>
<evidence type="ECO:0000305" key="5"/>
<evidence type="ECO:0007829" key="6">
    <source>
        <dbReference type="PDB" id="2K36"/>
    </source>
</evidence>
<evidence type="ECO:0007829" key="7">
    <source>
        <dbReference type="PDB" id="3JRV"/>
    </source>
</evidence>
<comment type="function">
    <text evidence="1 2 3">Virulence factor that affects the acute immune response to infection (PubMed:23580427). Bcl-2-like protein which, through its interaction with the DEAD box RNA helicase DDX3X/DDX3, prevents TBK1/IKKepsilon-mediated IRF3 activation. Contributes to virulence by binding to the host TRAF6 and IRAK2 and preventing host NF-kappa-B activation.</text>
</comment>
<comment type="subunit">
    <text evidence="1 2">Interacts with DDX3; this interaction inhibits DDX3 and suppresses DDX3-mediated IFN-beta promoter induction. Interacts with TRAF6 and IRAK2; these interactions suppress TLR-dependent NF-KappaB activation.</text>
</comment>
<comment type="interaction">
    <interactant intactId="EBI-6152154">
        <id>P68466</id>
    </interactant>
    <interactant intactId="EBI-353779">
        <id>O00571</id>
        <label>DDX3X</label>
    </interactant>
    <organismsDiffer>true</organismsDiffer>
    <experiments>6</experiments>
</comment>
<comment type="subcellular location">
    <subcellularLocation>
        <location evidence="3">Host cytoplasm</location>
    </subcellularLocation>
</comment>
<comment type="induction">
    <text evidence="4">Expressed in the early phase of the viral replicative cycle.</text>
</comment>
<comment type="similarity">
    <text evidence="5">Belongs to the orthopoxvirus OPG044 family.</text>
</comment>
<name>PG044_VACCW</name>
<feature type="chain" id="PRO_0000099609" description="Protein K7">
    <location>
        <begin position="1"/>
        <end position="149"/>
    </location>
</feature>
<feature type="helix" evidence="7">
    <location>
        <begin position="7"/>
        <end position="9"/>
    </location>
</feature>
<feature type="turn" evidence="7">
    <location>
        <begin position="13"/>
        <end position="16"/>
    </location>
</feature>
<feature type="helix" evidence="7">
    <location>
        <begin position="23"/>
        <end position="25"/>
    </location>
</feature>
<feature type="helix" evidence="7">
    <location>
        <begin position="26"/>
        <end position="42"/>
    </location>
</feature>
<feature type="strand" evidence="6">
    <location>
        <begin position="47"/>
        <end position="50"/>
    </location>
</feature>
<feature type="helix" evidence="7">
    <location>
        <begin position="52"/>
        <end position="58"/>
    </location>
</feature>
<feature type="helix" evidence="7">
    <location>
        <begin position="60"/>
        <end position="68"/>
    </location>
</feature>
<feature type="helix" evidence="7">
    <location>
        <begin position="70"/>
        <end position="80"/>
    </location>
</feature>
<feature type="helix" evidence="7">
    <location>
        <begin position="89"/>
        <end position="91"/>
    </location>
</feature>
<feature type="helix" evidence="7">
    <location>
        <begin position="95"/>
        <end position="114"/>
    </location>
</feature>
<feature type="helix" evidence="7">
    <location>
        <begin position="119"/>
        <end position="121"/>
    </location>
</feature>
<feature type="helix" evidence="7">
    <location>
        <begin position="128"/>
        <end position="131"/>
    </location>
</feature>
<feature type="helix" evidence="7">
    <location>
        <begin position="134"/>
        <end position="148"/>
    </location>
</feature>
<proteinExistence type="evidence at protein level"/>
<accession>P68466</accession>
<accession>P18382</accession>
<reference key="1">
    <citation type="journal article" date="1988" name="J. Gen. Virol.">
        <title>Non-essential genes in the vaccinia virus HindIII K fragment: a gene related to serine protease inhibitors and a gene related to the 37K vaccinia virus major envelope antigen.</title>
        <authorList>
            <person name="Boursnell M.E.G."/>
            <person name="Foulds I.J."/>
            <person name="Campbell J.I."/>
            <person name="Binns M.M."/>
        </authorList>
    </citation>
    <scope>NUCLEOTIDE SEQUENCE [GENOMIC DNA]</scope>
</reference>
<reference key="2">
    <citation type="submission" date="2003-02" db="EMBL/GenBank/DDBJ databases">
        <title>Sequencing of the coding region of Vaccinia-WR to an average 9-fold redundancy and an error rate of 0.16/10kb.</title>
        <authorList>
            <person name="Esposito J.J."/>
            <person name="Frace A.M."/>
            <person name="Sammons S.A."/>
            <person name="Olsen-Rasmussen M."/>
            <person name="Osborne J."/>
            <person name="Wohlhueter R."/>
        </authorList>
    </citation>
    <scope>NUCLEOTIDE SEQUENCE [LARGE SCALE GENOMIC DNA]</scope>
</reference>
<reference key="3">
    <citation type="journal article" date="2008" name="EMBO J.">
        <title>Viral targeting of DEAD box protein 3 reveals its role in TBK1/IKKepsilon-mediated IRF activation.</title>
        <authorList>
            <person name="Schroder M."/>
            <person name="Baran M."/>
            <person name="Bowie A.G."/>
        </authorList>
    </citation>
    <scope>FUNCTION</scope>
    <scope>INTERACTION WITH HUMAN TRAF6 AND IRAK2</scope>
</reference>
<reference key="4">
    <citation type="journal article" date="2009" name="Structure">
        <title>Structural basis for targeting of human RNA helicase DDX3 by poxvirus protein K7.</title>
        <authorList>
            <person name="Oda S."/>
            <person name="Schroder M."/>
            <person name="Khan A.R."/>
        </authorList>
    </citation>
    <scope>FUNCTION</scope>
    <scope>INTERACTION WITH HUMAN DDX3X</scope>
    <scope>X-RAY CRYSTALLOGRAPHY (1.6 ANGSTROMS)</scope>
</reference>
<reference key="5">
    <citation type="journal article" date="2013" name="J. Gen. Virol.">
        <title>Vaccinia virus protein K7 is a virulence factor that alters the acute immune response to infection.</title>
        <authorList>
            <person name="Benfield C.T.O."/>
            <person name="Ren H."/>
            <person name="Lucas S.J."/>
            <person name="Bahsoun B."/>
            <person name="Smith G.L."/>
        </authorList>
    </citation>
    <scope>FUNCTION</scope>
    <scope>SUBCELLULAR LOCATION</scope>
</reference>
<reference key="6">
    <citation type="journal article" date="2015" name="J. Virol.">
        <title>Deciphering poxvirus gene expression by RNA sequencing and ribosome profiling.</title>
        <authorList>
            <person name="Yang Z."/>
            <person name="Cao S."/>
            <person name="Martens C.A."/>
            <person name="Porcella S.F."/>
            <person name="Xie Z."/>
            <person name="Ma M."/>
            <person name="Shen B."/>
            <person name="Moss B."/>
        </authorList>
    </citation>
    <scope>INDUCTION</scope>
</reference>